<reference key="1">
    <citation type="journal article" date="2006" name="Genome Biol.">
        <title>Genomic analysis reveals that Pseudomonas aeruginosa virulence is combinatorial.</title>
        <authorList>
            <person name="Lee D.G."/>
            <person name="Urbach J.M."/>
            <person name="Wu G."/>
            <person name="Liberati N.T."/>
            <person name="Feinbaum R.L."/>
            <person name="Miyata S."/>
            <person name="Diggins L.T."/>
            <person name="He J."/>
            <person name="Saucier M."/>
            <person name="Deziel E."/>
            <person name="Friedman L."/>
            <person name="Li L."/>
            <person name="Grills G."/>
            <person name="Montgomery K."/>
            <person name="Kucherlapati R."/>
            <person name="Rahme L.G."/>
            <person name="Ausubel F.M."/>
        </authorList>
    </citation>
    <scope>NUCLEOTIDE SEQUENCE [LARGE SCALE GENOMIC DNA]</scope>
    <source>
        <strain>UCBPP-PA14</strain>
    </source>
</reference>
<gene>
    <name evidence="1" type="primary">hslV</name>
    <name type="ordered locus">PA14_66770</name>
</gene>
<organism>
    <name type="scientific">Pseudomonas aeruginosa (strain UCBPP-PA14)</name>
    <dbReference type="NCBI Taxonomy" id="208963"/>
    <lineage>
        <taxon>Bacteria</taxon>
        <taxon>Pseudomonadati</taxon>
        <taxon>Pseudomonadota</taxon>
        <taxon>Gammaproteobacteria</taxon>
        <taxon>Pseudomonadales</taxon>
        <taxon>Pseudomonadaceae</taxon>
        <taxon>Pseudomonas</taxon>
    </lineage>
</organism>
<proteinExistence type="inferred from homology"/>
<name>HSLV_PSEAB</name>
<protein>
    <recommendedName>
        <fullName evidence="1">ATP-dependent protease subunit HslV</fullName>
        <ecNumber evidence="1">3.4.25.2</ecNumber>
    </recommendedName>
</protein>
<sequence length="177" mass="18785">MTTIVSVRRNGKVVMGGDGQVSLGNTVMKGNAKKVRRLYHGQVLAGFAGATADAFTLFERFEQQLEKHQGHLVRAAVELAKDWRTDRSLSRLEAMLAVANKDASLIITGNGDVVEPEHGLIAMGSGGGFAQAAALALLQHNAELSAREVAETALNIAGSICVFTNQNLTIEELDSAV</sequence>
<accession>Q02EW4</accession>
<comment type="function">
    <text evidence="1">Protease subunit of a proteasome-like degradation complex believed to be a general protein degrading machinery.</text>
</comment>
<comment type="catalytic activity">
    <reaction evidence="1">
        <text>ATP-dependent cleavage of peptide bonds with broad specificity.</text>
        <dbReference type="EC" id="3.4.25.2"/>
    </reaction>
</comment>
<comment type="activity regulation">
    <text evidence="1">Allosterically activated by HslU binding.</text>
</comment>
<comment type="subunit">
    <text evidence="1">A double ring-shaped homohexamer of HslV is capped on each side by a ring-shaped HslU homohexamer. The assembly of the HslU/HslV complex is dependent on binding of ATP.</text>
</comment>
<comment type="subcellular location">
    <subcellularLocation>
        <location evidence="1">Cytoplasm</location>
    </subcellularLocation>
</comment>
<comment type="similarity">
    <text evidence="1">Belongs to the peptidase T1B family. HslV subfamily.</text>
</comment>
<feature type="chain" id="PRO_1000012648" description="ATP-dependent protease subunit HslV">
    <location>
        <begin position="1"/>
        <end position="177"/>
    </location>
</feature>
<feature type="active site" evidence="1">
    <location>
        <position position="2"/>
    </location>
</feature>
<feature type="binding site" evidence="1">
    <location>
        <position position="158"/>
    </location>
    <ligand>
        <name>Na(+)</name>
        <dbReference type="ChEBI" id="CHEBI:29101"/>
    </ligand>
</feature>
<feature type="binding site" evidence="1">
    <location>
        <position position="161"/>
    </location>
    <ligand>
        <name>Na(+)</name>
        <dbReference type="ChEBI" id="CHEBI:29101"/>
    </ligand>
</feature>
<feature type="binding site" evidence="1">
    <location>
        <position position="164"/>
    </location>
    <ligand>
        <name>Na(+)</name>
        <dbReference type="ChEBI" id="CHEBI:29101"/>
    </ligand>
</feature>
<dbReference type="EC" id="3.4.25.2" evidence="1"/>
<dbReference type="EMBL" id="CP000438">
    <property type="protein sequence ID" value="ABJ14437.1"/>
    <property type="molecule type" value="Genomic_DNA"/>
</dbReference>
<dbReference type="RefSeq" id="WP_003095852.1">
    <property type="nucleotide sequence ID" value="NZ_CP034244.1"/>
</dbReference>
<dbReference type="SMR" id="Q02EW4"/>
<dbReference type="MEROPS" id="T01.006"/>
<dbReference type="GeneID" id="77223590"/>
<dbReference type="KEGG" id="pau:PA14_66770"/>
<dbReference type="PseudoCAP" id="PA14_66770"/>
<dbReference type="HOGENOM" id="CLU_093872_1_0_6"/>
<dbReference type="BioCyc" id="PAER208963:G1G74-5633-MONOMER"/>
<dbReference type="Proteomes" id="UP000000653">
    <property type="component" value="Chromosome"/>
</dbReference>
<dbReference type="GO" id="GO:0009376">
    <property type="term" value="C:HslUV protease complex"/>
    <property type="evidence" value="ECO:0007669"/>
    <property type="project" value="UniProtKB-UniRule"/>
</dbReference>
<dbReference type="GO" id="GO:0005839">
    <property type="term" value="C:proteasome core complex"/>
    <property type="evidence" value="ECO:0007669"/>
    <property type="project" value="InterPro"/>
</dbReference>
<dbReference type="GO" id="GO:0046872">
    <property type="term" value="F:metal ion binding"/>
    <property type="evidence" value="ECO:0007669"/>
    <property type="project" value="UniProtKB-KW"/>
</dbReference>
<dbReference type="GO" id="GO:0004298">
    <property type="term" value="F:threonine-type endopeptidase activity"/>
    <property type="evidence" value="ECO:0007669"/>
    <property type="project" value="UniProtKB-KW"/>
</dbReference>
<dbReference type="GO" id="GO:0051603">
    <property type="term" value="P:proteolysis involved in protein catabolic process"/>
    <property type="evidence" value="ECO:0007669"/>
    <property type="project" value="InterPro"/>
</dbReference>
<dbReference type="CDD" id="cd01913">
    <property type="entry name" value="protease_HslV"/>
    <property type="match status" value="1"/>
</dbReference>
<dbReference type="FunFam" id="3.60.20.10:FF:000002">
    <property type="entry name" value="ATP-dependent protease subunit HslV"/>
    <property type="match status" value="1"/>
</dbReference>
<dbReference type="Gene3D" id="3.60.20.10">
    <property type="entry name" value="Glutamine Phosphoribosylpyrophosphate, subunit 1, domain 1"/>
    <property type="match status" value="1"/>
</dbReference>
<dbReference type="HAMAP" id="MF_00248">
    <property type="entry name" value="HslV"/>
    <property type="match status" value="1"/>
</dbReference>
<dbReference type="InterPro" id="IPR022281">
    <property type="entry name" value="ATP-dep_Prtase_HsIV_su"/>
</dbReference>
<dbReference type="InterPro" id="IPR029055">
    <property type="entry name" value="Ntn_hydrolases_N"/>
</dbReference>
<dbReference type="InterPro" id="IPR001353">
    <property type="entry name" value="Proteasome_sua/b"/>
</dbReference>
<dbReference type="InterPro" id="IPR023333">
    <property type="entry name" value="Proteasome_suB-type"/>
</dbReference>
<dbReference type="NCBIfam" id="TIGR03692">
    <property type="entry name" value="ATP_dep_HslV"/>
    <property type="match status" value="1"/>
</dbReference>
<dbReference type="NCBIfam" id="NF003964">
    <property type="entry name" value="PRK05456.1"/>
    <property type="match status" value="1"/>
</dbReference>
<dbReference type="PANTHER" id="PTHR32194:SF0">
    <property type="entry name" value="ATP-DEPENDENT PROTEASE SUBUNIT HSLV"/>
    <property type="match status" value="1"/>
</dbReference>
<dbReference type="PANTHER" id="PTHR32194">
    <property type="entry name" value="METALLOPROTEASE TLDD"/>
    <property type="match status" value="1"/>
</dbReference>
<dbReference type="Pfam" id="PF00227">
    <property type="entry name" value="Proteasome"/>
    <property type="match status" value="1"/>
</dbReference>
<dbReference type="PIRSF" id="PIRSF039093">
    <property type="entry name" value="HslV"/>
    <property type="match status" value="1"/>
</dbReference>
<dbReference type="SUPFAM" id="SSF56235">
    <property type="entry name" value="N-terminal nucleophile aminohydrolases (Ntn hydrolases)"/>
    <property type="match status" value="1"/>
</dbReference>
<dbReference type="PROSITE" id="PS51476">
    <property type="entry name" value="PROTEASOME_BETA_2"/>
    <property type="match status" value="1"/>
</dbReference>
<evidence type="ECO:0000255" key="1">
    <source>
        <dbReference type="HAMAP-Rule" id="MF_00248"/>
    </source>
</evidence>
<keyword id="KW-0021">Allosteric enzyme</keyword>
<keyword id="KW-0963">Cytoplasm</keyword>
<keyword id="KW-0378">Hydrolase</keyword>
<keyword id="KW-0479">Metal-binding</keyword>
<keyword id="KW-0645">Protease</keyword>
<keyword id="KW-0915">Sodium</keyword>
<keyword id="KW-0346">Stress response</keyword>
<keyword id="KW-0888">Threonine protease</keyword>